<feature type="chain" id="PRO_0000379276" description="ATP-dependent helicase/nuclease subunit A">
    <location>
        <begin position="1"/>
        <end position="1262"/>
    </location>
</feature>
<feature type="domain" description="UvrD-like helicase ATP-binding" evidence="1">
    <location>
        <begin position="5"/>
        <end position="476"/>
    </location>
</feature>
<feature type="domain" description="UvrD-like helicase C-terminal" evidence="1">
    <location>
        <begin position="515"/>
        <end position="808"/>
    </location>
</feature>
<feature type="binding site" evidence="1">
    <location>
        <begin position="26"/>
        <end position="33"/>
    </location>
    <ligand>
        <name>ATP</name>
        <dbReference type="ChEBI" id="CHEBI:30616"/>
    </ligand>
</feature>
<protein>
    <recommendedName>
        <fullName evidence="1">ATP-dependent helicase/nuclease subunit A</fullName>
        <ecNumber evidence="1">3.1.-.-</ecNumber>
        <ecNumber evidence="1">5.6.2.4</ecNumber>
    </recommendedName>
    <alternativeName>
        <fullName evidence="1">ATP-dependent helicase/nuclease AddA</fullName>
    </alternativeName>
    <alternativeName>
        <fullName evidence="1">DNA 3'-5' helicase AddA</fullName>
    </alternativeName>
</protein>
<dbReference type="EC" id="3.1.-.-" evidence="1"/>
<dbReference type="EC" id="5.6.2.4" evidence="1"/>
<dbReference type="EMBL" id="CP000416">
    <property type="protein sequence ID" value="ABJ65315.1"/>
    <property type="molecule type" value="Genomic_DNA"/>
</dbReference>
<dbReference type="RefSeq" id="WP_011668835.1">
    <property type="nucleotide sequence ID" value="NC_008497.1"/>
</dbReference>
<dbReference type="SMR" id="Q03NA7"/>
<dbReference type="STRING" id="387344.LVIS_2267"/>
<dbReference type="KEGG" id="lbr:LVIS_2267"/>
<dbReference type="PATRIC" id="fig|387344.15.peg.2171"/>
<dbReference type="eggNOG" id="COG1074">
    <property type="taxonomic scope" value="Bacteria"/>
</dbReference>
<dbReference type="HOGENOM" id="CLU_001114_3_1_9"/>
<dbReference type="Proteomes" id="UP000001652">
    <property type="component" value="Chromosome"/>
</dbReference>
<dbReference type="GO" id="GO:0005829">
    <property type="term" value="C:cytosol"/>
    <property type="evidence" value="ECO:0007669"/>
    <property type="project" value="TreeGrafter"/>
</dbReference>
<dbReference type="GO" id="GO:0033202">
    <property type="term" value="C:DNA helicase complex"/>
    <property type="evidence" value="ECO:0007669"/>
    <property type="project" value="TreeGrafter"/>
</dbReference>
<dbReference type="GO" id="GO:0043138">
    <property type="term" value="F:3'-5' DNA helicase activity"/>
    <property type="evidence" value="ECO:0007669"/>
    <property type="project" value="UniProtKB-UniRule"/>
</dbReference>
<dbReference type="GO" id="GO:0008408">
    <property type="term" value="F:3'-5' exonuclease activity"/>
    <property type="evidence" value="ECO:0007669"/>
    <property type="project" value="UniProtKB-UniRule"/>
</dbReference>
<dbReference type="GO" id="GO:0005524">
    <property type="term" value="F:ATP binding"/>
    <property type="evidence" value="ECO:0007669"/>
    <property type="project" value="UniProtKB-UniRule"/>
</dbReference>
<dbReference type="GO" id="GO:0016887">
    <property type="term" value="F:ATP hydrolysis activity"/>
    <property type="evidence" value="ECO:0007669"/>
    <property type="project" value="RHEA"/>
</dbReference>
<dbReference type="GO" id="GO:0003690">
    <property type="term" value="F:double-stranded DNA binding"/>
    <property type="evidence" value="ECO:0007669"/>
    <property type="project" value="UniProtKB-UniRule"/>
</dbReference>
<dbReference type="GO" id="GO:0000724">
    <property type="term" value="P:double-strand break repair via homologous recombination"/>
    <property type="evidence" value="ECO:0007669"/>
    <property type="project" value="UniProtKB-UniRule"/>
</dbReference>
<dbReference type="CDD" id="cd17932">
    <property type="entry name" value="DEXQc_UvrD"/>
    <property type="match status" value="1"/>
</dbReference>
<dbReference type="Gene3D" id="1.10.274.50">
    <property type="match status" value="1"/>
</dbReference>
<dbReference type="Gene3D" id="3.90.320.10">
    <property type="match status" value="1"/>
</dbReference>
<dbReference type="Gene3D" id="3.40.50.300">
    <property type="entry name" value="P-loop containing nucleotide triphosphate hydrolases"/>
    <property type="match status" value="4"/>
</dbReference>
<dbReference type="Gene3D" id="1.10.486.10">
    <property type="entry name" value="PCRA, domain 4"/>
    <property type="match status" value="1"/>
</dbReference>
<dbReference type="HAMAP" id="MF_01451">
    <property type="entry name" value="AddA"/>
    <property type="match status" value="1"/>
</dbReference>
<dbReference type="InterPro" id="IPR014152">
    <property type="entry name" value="AddA"/>
</dbReference>
<dbReference type="InterPro" id="IPR014017">
    <property type="entry name" value="DNA_helicase_UvrD-like_C"/>
</dbReference>
<dbReference type="InterPro" id="IPR000212">
    <property type="entry name" value="DNA_helicase_UvrD/REP"/>
</dbReference>
<dbReference type="InterPro" id="IPR027417">
    <property type="entry name" value="P-loop_NTPase"/>
</dbReference>
<dbReference type="InterPro" id="IPR011604">
    <property type="entry name" value="PDDEXK-like_dom_sf"/>
</dbReference>
<dbReference type="InterPro" id="IPR011335">
    <property type="entry name" value="Restrct_endonuc-II-like"/>
</dbReference>
<dbReference type="InterPro" id="IPR014016">
    <property type="entry name" value="UvrD-like_ATP-bd"/>
</dbReference>
<dbReference type="NCBIfam" id="TIGR02785">
    <property type="entry name" value="addA_Gpos"/>
    <property type="match status" value="1"/>
</dbReference>
<dbReference type="PANTHER" id="PTHR11070:SF48">
    <property type="entry name" value="ATP-DEPENDENT HELICASE_NUCLEASE SUBUNIT A"/>
    <property type="match status" value="1"/>
</dbReference>
<dbReference type="PANTHER" id="PTHR11070">
    <property type="entry name" value="UVRD / RECB / PCRA DNA HELICASE FAMILY MEMBER"/>
    <property type="match status" value="1"/>
</dbReference>
<dbReference type="Pfam" id="PF00580">
    <property type="entry name" value="UvrD-helicase"/>
    <property type="match status" value="1"/>
</dbReference>
<dbReference type="Pfam" id="PF13361">
    <property type="entry name" value="UvrD_C"/>
    <property type="match status" value="1"/>
</dbReference>
<dbReference type="SUPFAM" id="SSF52540">
    <property type="entry name" value="P-loop containing nucleoside triphosphate hydrolases"/>
    <property type="match status" value="1"/>
</dbReference>
<dbReference type="SUPFAM" id="SSF52980">
    <property type="entry name" value="Restriction endonuclease-like"/>
    <property type="match status" value="1"/>
</dbReference>
<dbReference type="PROSITE" id="PS51198">
    <property type="entry name" value="UVRD_HELICASE_ATP_BIND"/>
    <property type="match status" value="1"/>
</dbReference>
<dbReference type="PROSITE" id="PS51217">
    <property type="entry name" value="UVRD_HELICASE_CTER"/>
    <property type="match status" value="1"/>
</dbReference>
<proteinExistence type="inferred from homology"/>
<reference key="1">
    <citation type="journal article" date="2006" name="Proc. Natl. Acad. Sci. U.S.A.">
        <title>Comparative genomics of the lactic acid bacteria.</title>
        <authorList>
            <person name="Makarova K.S."/>
            <person name="Slesarev A."/>
            <person name="Wolf Y.I."/>
            <person name="Sorokin A."/>
            <person name="Mirkin B."/>
            <person name="Koonin E.V."/>
            <person name="Pavlov A."/>
            <person name="Pavlova N."/>
            <person name="Karamychev V."/>
            <person name="Polouchine N."/>
            <person name="Shakhova V."/>
            <person name="Grigoriev I."/>
            <person name="Lou Y."/>
            <person name="Rohksar D."/>
            <person name="Lucas S."/>
            <person name="Huang K."/>
            <person name="Goodstein D.M."/>
            <person name="Hawkins T."/>
            <person name="Plengvidhya V."/>
            <person name="Welker D."/>
            <person name="Hughes J."/>
            <person name="Goh Y."/>
            <person name="Benson A."/>
            <person name="Baldwin K."/>
            <person name="Lee J.-H."/>
            <person name="Diaz-Muniz I."/>
            <person name="Dosti B."/>
            <person name="Smeianov V."/>
            <person name="Wechter W."/>
            <person name="Barabote R."/>
            <person name="Lorca G."/>
            <person name="Altermann E."/>
            <person name="Barrangou R."/>
            <person name="Ganesan B."/>
            <person name="Xie Y."/>
            <person name="Rawsthorne H."/>
            <person name="Tamir D."/>
            <person name="Parker C."/>
            <person name="Breidt F."/>
            <person name="Broadbent J.R."/>
            <person name="Hutkins R."/>
            <person name="O'Sullivan D."/>
            <person name="Steele J."/>
            <person name="Unlu G."/>
            <person name="Saier M.H. Jr."/>
            <person name="Klaenhammer T."/>
            <person name="Richardson P."/>
            <person name="Kozyavkin S."/>
            <person name="Weimer B.C."/>
            <person name="Mills D.A."/>
        </authorList>
    </citation>
    <scope>NUCLEOTIDE SEQUENCE [LARGE SCALE GENOMIC DNA]</scope>
    <source>
        <strain>ATCC 367 / BCRC 12310 / CIP 105137 / JCM 1170 / LMG 11437 / NCIMB 947 / NCTC 947</strain>
    </source>
</reference>
<keyword id="KW-0067">ATP-binding</keyword>
<keyword id="KW-0227">DNA damage</keyword>
<keyword id="KW-0234">DNA repair</keyword>
<keyword id="KW-0238">DNA-binding</keyword>
<keyword id="KW-0269">Exonuclease</keyword>
<keyword id="KW-0347">Helicase</keyword>
<keyword id="KW-0378">Hydrolase</keyword>
<keyword id="KW-0413">Isomerase</keyword>
<keyword id="KW-0540">Nuclease</keyword>
<keyword id="KW-0547">Nucleotide-binding</keyword>
<keyword id="KW-1185">Reference proteome</keyword>
<comment type="function">
    <text evidence="1">The heterodimer acts as both an ATP-dependent DNA helicase and an ATP-dependent, dual-direction single-stranded exonuclease. Recognizes the chi site generating a DNA molecule suitable for the initiation of homologous recombination. The AddA nuclease domain is required for chi fragment generation; this subunit has the helicase and 3' -&gt; 5' nuclease activities.</text>
</comment>
<comment type="catalytic activity">
    <reaction evidence="1">
        <text>Couples ATP hydrolysis with the unwinding of duplex DNA by translocating in the 3'-5' direction.</text>
        <dbReference type="EC" id="5.6.2.4"/>
    </reaction>
</comment>
<comment type="catalytic activity">
    <reaction evidence="1">
        <text>ATP + H2O = ADP + phosphate + H(+)</text>
        <dbReference type="Rhea" id="RHEA:13065"/>
        <dbReference type="ChEBI" id="CHEBI:15377"/>
        <dbReference type="ChEBI" id="CHEBI:15378"/>
        <dbReference type="ChEBI" id="CHEBI:30616"/>
        <dbReference type="ChEBI" id="CHEBI:43474"/>
        <dbReference type="ChEBI" id="CHEBI:456216"/>
        <dbReference type="EC" id="5.6.2.4"/>
    </reaction>
</comment>
<comment type="cofactor">
    <cofactor evidence="1">
        <name>Mg(2+)</name>
        <dbReference type="ChEBI" id="CHEBI:18420"/>
    </cofactor>
</comment>
<comment type="subunit">
    <text evidence="1">Heterodimer of AddA and AddB/RexB.</text>
</comment>
<comment type="similarity">
    <text evidence="1">Belongs to the helicase family. AddA subfamily.</text>
</comment>
<name>ADDA_LEVBA</name>
<organism>
    <name type="scientific">Levilactobacillus brevis (strain ATCC 367 / BCRC 12310 / CIP 105137 / JCM 1170 / LMG 11437 / NCIMB 947 / NCTC 947)</name>
    <name type="common">Lactobacillus brevis</name>
    <dbReference type="NCBI Taxonomy" id="387344"/>
    <lineage>
        <taxon>Bacteria</taxon>
        <taxon>Bacillati</taxon>
        <taxon>Bacillota</taxon>
        <taxon>Bacilli</taxon>
        <taxon>Lactobacillales</taxon>
        <taxon>Lactobacillaceae</taxon>
        <taxon>Levilactobacillus</taxon>
    </lineage>
</organism>
<sequence length="1262" mass="141233">MSTKFSFTPSQDQAIHQTGNNLLVSASAGSGKTRVLVQRVIERLKTGVGIDQILIVTFTKAAAAEMRERIQTALRQELAVSQGDSAQQQFYLRQLNQLPVADISTLDAFCLRLLQRYYYVIDLDPVFRLLADETENGLLRDEVWADLREDLYANDDSGLFARLTENFSGDRNDQGLADLVQQTYTFANATPNPTAWLAELPQPYQLDSDQLMTTSFYQQRLRPFFQSQLQQLQADLTSAQALANQAGLDKQAAHVTAVLENVAAVQQLVTGDSWNALRAAIQDFAWGRMPAVRKTNEDYPIYNELKTTYYDPARKQLDSLKKTYLIQDEQQAMTTIRRSGELVGELSRVVTAFRTAYRQEKQRRHVLDFADVEHAALAILTQDSDQSRQVAAQLRHQFAEIMVDEYQDTNGLQEAILTAIAEPAPQGNLFMVGDVKQSIYRFRQADPTLFMTKTDQYAADAAAGELIVLAENFRSMKNVDDFTNLIFKQLMDRELGEIDYTGAAQLKFGASYYPDTVTSTAELLVYLTEDAPESAGDADSEAMDATFQVDNKHQGEVLMVGQKIQQLIADQTPIYDREAKQVRPMTYGDITLLTPTRTNNLIITDELRRLGIPVVVNDARNYFKTTEIQIMMALLQIIDNPYQDIPLAAVLRSPIVGLNENELALLRINQRTGDYYQAVLHFQRSFVPNQASDFQQAVYQKVSHFLEQLQEFRDIAQQDELVTLIWRIYQETGFLDYVGGMPAGEQRQANLHALYERAKSYEQSSFKGLFQFVRFVERLQERDDDLAGAPVQAADDAVSVMTIHGSKGLEFPVVFIMDASRQFNKQDQQGNYVMSGKTGIGIDYLDPDSRVKAPSLQKLVTAQAISRASLAEEMRKLYVALTRAESRVYIVGSHKTQEAAISAWEQAYQSPNLVLNATLREKNTLANYLDWIGMCLVRDPKFAAELRQGTTTFSGLAGDPATFAVHFVTAHDLGPTQGVNETAVDWLQAASETAAKVTTPPVDTEQLHQIMDFRYPHQAATATTAYQSVSEAKRLFEDPDNATIGEYQASATGQVGGHRFVTHDFARPDFLQTVREPLATEIGSATHLVLQQLDVTVTPTLDRVQGVIDQLVADQVLTAEVAQRIQPELILRFFSSSVGQQVLAAPDQLHREVPFSLLMPARSLFQDFQETDSQVLVHGIIDGYLTTPAGVILFDYKTDHVNAQNQAASIEKIVERYGGQVNLYAAALKQMTGQPIVGQYLYLLAIGELVAVPEQQVRRLSE</sequence>
<evidence type="ECO:0000255" key="1">
    <source>
        <dbReference type="HAMAP-Rule" id="MF_01451"/>
    </source>
</evidence>
<gene>
    <name evidence="1" type="primary">addA</name>
    <name type="ordered locus">LVIS_2267</name>
</gene>
<accession>Q03NA7</accession>